<keyword id="KW-1003">Cell membrane</keyword>
<keyword id="KW-0444">Lipid biosynthesis</keyword>
<keyword id="KW-0443">Lipid metabolism</keyword>
<keyword id="KW-0472">Membrane</keyword>
<keyword id="KW-0594">Phospholipid biosynthesis</keyword>
<keyword id="KW-1208">Phospholipid metabolism</keyword>
<keyword id="KW-1185">Reference proteome</keyword>
<keyword id="KW-0808">Transferase</keyword>
<keyword id="KW-0812">Transmembrane</keyword>
<keyword id="KW-1133">Transmembrane helix</keyword>
<protein>
    <recommendedName>
        <fullName evidence="5">Cardiolipin synthase (CMP-forming)</fullName>
        <shortName evidence="5">CLS</shortName>
        <ecNumber evidence="6">2.7.8.41</ecNumber>
    </recommendedName>
</protein>
<accession>Q9KZP3</accession>
<gene>
    <name evidence="4" type="primary">clsA</name>
    <name evidence="7" type="ordered locus">SCO1389</name>
    <name evidence="7" type="ORF">SC1A8A.09c</name>
</gene>
<comment type="function">
    <text evidence="2 3">Catalyzes the synthesis of cardiolipin (CL) (diphosphatidylglycerol) by specifically transferring a phosphatidyl group from CDP-diacylglycerol to phosphatidylglycerol (PG).</text>
</comment>
<comment type="catalytic activity">
    <reaction evidence="6">
        <text>a CDP-1,2-diacyl-sn-glycerol + a 1,2-diacyl-sn-glycero-3-phospho-(1'-sn-glycerol) = a cardiolipin + CMP + H(+)</text>
        <dbReference type="Rhea" id="RHEA:32931"/>
        <dbReference type="ChEBI" id="CHEBI:15378"/>
        <dbReference type="ChEBI" id="CHEBI:58332"/>
        <dbReference type="ChEBI" id="CHEBI:60377"/>
        <dbReference type="ChEBI" id="CHEBI:62237"/>
        <dbReference type="ChEBI" id="CHEBI:64716"/>
        <dbReference type="EC" id="2.7.8.41"/>
    </reaction>
</comment>
<comment type="cofactor">
    <cofactor evidence="2">
        <name>a divalent metal cation</name>
        <dbReference type="ChEBI" id="CHEBI:60240"/>
    </cofactor>
    <text evidence="2">Highest activity found with Co(2+) whereas Mn(2+) supports a lower activity; no activity detected with Ni(2+), Ca(2+) or Mg(2+).</text>
</comment>
<comment type="biophysicochemical properties">
    <phDependence>
        <text evidence="2">Optimum pH is 7.5.</text>
    </phDependence>
</comment>
<comment type="subcellular location">
    <subcellularLocation>
        <location evidence="6">Cell membrane</location>
        <topology evidence="1">Multi-pass membrane protein</topology>
    </subcellularLocation>
</comment>
<comment type="disruption phenotype">
    <text evidence="3">Inviable (PubMed:22409773). Knockdown of the enzyme leads to lower cellular cardiolipin levels, higher phosphatidylglycerol levels, and increases the distance that hypha grow before changing direction and branch (PubMed:22409773).</text>
</comment>
<comment type="similarity">
    <text evidence="5">Belongs to the CDP-alcohol phosphatidyltransferase class-I family.</text>
</comment>
<name>CRLS1_STRCO</name>
<proteinExistence type="evidence at protein level"/>
<reference evidence="8" key="1">
    <citation type="journal article" date="2002" name="Nature">
        <title>Complete genome sequence of the model actinomycete Streptomyces coelicolor A3(2).</title>
        <authorList>
            <person name="Bentley S.D."/>
            <person name="Chater K.F."/>
            <person name="Cerdeno-Tarraga A.-M."/>
            <person name="Challis G.L."/>
            <person name="Thomson N.R."/>
            <person name="James K.D."/>
            <person name="Harris D.E."/>
            <person name="Quail M.A."/>
            <person name="Kieser H."/>
            <person name="Harper D."/>
            <person name="Bateman A."/>
            <person name="Brown S."/>
            <person name="Chandra G."/>
            <person name="Chen C.W."/>
            <person name="Collins M."/>
            <person name="Cronin A."/>
            <person name="Fraser A."/>
            <person name="Goble A."/>
            <person name="Hidalgo J."/>
            <person name="Hornsby T."/>
            <person name="Howarth S."/>
            <person name="Huang C.-H."/>
            <person name="Kieser T."/>
            <person name="Larke L."/>
            <person name="Murphy L.D."/>
            <person name="Oliver K."/>
            <person name="O'Neil S."/>
            <person name="Rabbinowitsch E."/>
            <person name="Rajandream M.A."/>
            <person name="Rutherford K.M."/>
            <person name="Rutter S."/>
            <person name="Seeger K."/>
            <person name="Saunders D."/>
            <person name="Sharp S."/>
            <person name="Squares R."/>
            <person name="Squares S."/>
            <person name="Taylor K."/>
            <person name="Warren T."/>
            <person name="Wietzorrek A."/>
            <person name="Woodward J.R."/>
            <person name="Barrell B.G."/>
            <person name="Parkhill J."/>
            <person name="Hopwood D.A."/>
        </authorList>
    </citation>
    <scope>NUCLEOTIDE SEQUENCE [LARGE SCALE GENOMIC DNA]</scope>
    <source>
        <strain evidence="8">ATCC BAA-471 / A3(2) / M145</strain>
    </source>
</reference>
<reference evidence="5" key="2">
    <citation type="journal article" date="2009" name="J. Biol. Chem.">
        <title>A eukaryote-like cardiolipin synthase is present in Streptomyces coelicolor and in most actinobacteria.</title>
        <authorList>
            <person name="Sandoval-Calderon M."/>
            <person name="Geiger O."/>
            <person name="Guan Z."/>
            <person name="Barona-Gomez F."/>
            <person name="Sohlenkamp C."/>
        </authorList>
    </citation>
    <scope>FUNCTION</scope>
    <scope>CATALYTIC ACTIVITY</scope>
    <scope>COFACTOR</scope>
    <scope>BIOPHYSICOCHEMICAL PROPERTIES</scope>
    <scope>SUBCELLULAR LOCATION</scope>
</reference>
<reference evidence="5" key="3">
    <citation type="journal article" date="2012" name="Mol. Microbiol.">
        <title>Cardiolipin synthase is required for Streptomyces coelicolor morphogenesis.</title>
        <authorList>
            <person name="Jyothikumar V."/>
            <person name="Klanbut K."/>
            <person name="Tiong J."/>
            <person name="Roxburgh J.S."/>
            <person name="Hunter I.S."/>
            <person name="Smith T.K."/>
            <person name="Herron P.R."/>
        </authorList>
    </citation>
    <scope>FUNCTION</scope>
    <scope>DISRUPTION PHENOTYPE</scope>
</reference>
<sequence>MSIIGSFPPGGPRVEVQETRVQTDRVLTIPNILSMARLAGVPLFLWLILRPEFGGPQSDGWALLVLALSGVSDYLDGKLARRWNQISSLGRLLDPAADRLYILSTLVGLTWREILPLWLTLVLLAREAMLLVMVGILRRHGYPPPQVNFLGKAATFNLMYAFPLLLLSDGSGWIASLAAVFGWAFAGWGTTLYWWAGVLYVVQVRRLVRADVAAD</sequence>
<dbReference type="EC" id="2.7.8.41" evidence="6"/>
<dbReference type="EMBL" id="AL939108">
    <property type="protein sequence ID" value="CAB88885.1"/>
    <property type="molecule type" value="Genomic_DNA"/>
</dbReference>
<dbReference type="RefSeq" id="NP_625672.1">
    <property type="nucleotide sequence ID" value="NC_003888.3"/>
</dbReference>
<dbReference type="STRING" id="100226.gene:17758972"/>
<dbReference type="PaxDb" id="100226-SCO1389"/>
<dbReference type="KEGG" id="sco:SCO1389"/>
<dbReference type="PATRIC" id="fig|100226.15.peg.1397"/>
<dbReference type="eggNOG" id="COG0558">
    <property type="taxonomic scope" value="Bacteria"/>
</dbReference>
<dbReference type="HOGENOM" id="CLU_051314_6_1_11"/>
<dbReference type="InParanoid" id="Q9KZP3"/>
<dbReference type="OrthoDB" id="9796672at2"/>
<dbReference type="PhylomeDB" id="Q9KZP3"/>
<dbReference type="BRENDA" id="2.7.8.41">
    <property type="organism ID" value="5998"/>
</dbReference>
<dbReference type="Proteomes" id="UP000001973">
    <property type="component" value="Chromosome"/>
</dbReference>
<dbReference type="GO" id="GO:0005886">
    <property type="term" value="C:plasma membrane"/>
    <property type="evidence" value="ECO:0007669"/>
    <property type="project" value="UniProtKB-SubCell"/>
</dbReference>
<dbReference type="GO" id="GO:0043337">
    <property type="term" value="F:cardiolipin synthase (CMP-forming)"/>
    <property type="evidence" value="ECO:0000314"/>
    <property type="project" value="UniProtKB"/>
</dbReference>
<dbReference type="GO" id="GO:0008444">
    <property type="term" value="F:CDP-diacylglycerol-glycerol-3-phosphate 3-phosphatidyltransferase activity"/>
    <property type="evidence" value="ECO:0007669"/>
    <property type="project" value="InterPro"/>
</dbReference>
<dbReference type="GO" id="GO:0032049">
    <property type="term" value="P:cardiolipin biosynthetic process"/>
    <property type="evidence" value="ECO:0000314"/>
    <property type="project" value="UniProtKB"/>
</dbReference>
<dbReference type="GO" id="GO:0046474">
    <property type="term" value="P:glycerophospholipid biosynthetic process"/>
    <property type="evidence" value="ECO:0000318"/>
    <property type="project" value="GO_Central"/>
</dbReference>
<dbReference type="GO" id="GO:0007009">
    <property type="term" value="P:plasma membrane organization"/>
    <property type="evidence" value="ECO:0000315"/>
    <property type="project" value="UniProtKB"/>
</dbReference>
<dbReference type="FunFam" id="1.20.120.1760:FF:000010">
    <property type="entry name" value="CDP-diacylglycerol--glycerol-3-phosphate 3-phosphatidyltransferase"/>
    <property type="match status" value="1"/>
</dbReference>
<dbReference type="Gene3D" id="1.20.120.1760">
    <property type="match status" value="1"/>
</dbReference>
<dbReference type="InterPro" id="IPR050324">
    <property type="entry name" value="CDP-alcohol_PTase-I"/>
</dbReference>
<dbReference type="InterPro" id="IPR000462">
    <property type="entry name" value="CDP-OH_P_trans"/>
</dbReference>
<dbReference type="InterPro" id="IPR043130">
    <property type="entry name" value="CDP-OH_PTrfase_TM_dom"/>
</dbReference>
<dbReference type="InterPro" id="IPR048254">
    <property type="entry name" value="CDP_ALCOHOL_P_TRANSF_CS"/>
</dbReference>
<dbReference type="InterPro" id="IPR004570">
    <property type="entry name" value="Phosphatidylglycerol_P_synth"/>
</dbReference>
<dbReference type="PANTHER" id="PTHR14269:SF62">
    <property type="entry name" value="CDP-DIACYLGLYCEROL--GLYCEROL-3-PHOSPHATE 3-PHOSPHATIDYLTRANSFERASE 1, CHLOROPLASTIC"/>
    <property type="match status" value="1"/>
</dbReference>
<dbReference type="PANTHER" id="PTHR14269">
    <property type="entry name" value="CDP-DIACYLGLYCEROL--GLYCEROL-3-PHOSPHATE 3-PHOSPHATIDYLTRANSFERASE-RELATED"/>
    <property type="match status" value="1"/>
</dbReference>
<dbReference type="Pfam" id="PF01066">
    <property type="entry name" value="CDP-OH_P_transf"/>
    <property type="match status" value="1"/>
</dbReference>
<dbReference type="PIRSF" id="PIRSF000847">
    <property type="entry name" value="Phos_ph_gly_syn"/>
    <property type="match status" value="1"/>
</dbReference>
<dbReference type="PROSITE" id="PS00379">
    <property type="entry name" value="CDP_ALCOHOL_P_TRANSF"/>
    <property type="match status" value="1"/>
</dbReference>
<organism evidence="8">
    <name type="scientific">Streptomyces coelicolor (strain ATCC BAA-471 / A3(2) / M145)</name>
    <dbReference type="NCBI Taxonomy" id="100226"/>
    <lineage>
        <taxon>Bacteria</taxon>
        <taxon>Bacillati</taxon>
        <taxon>Actinomycetota</taxon>
        <taxon>Actinomycetes</taxon>
        <taxon>Kitasatosporales</taxon>
        <taxon>Streptomycetaceae</taxon>
        <taxon>Streptomyces</taxon>
        <taxon>Streptomyces albidoflavus group</taxon>
    </lineage>
</organism>
<evidence type="ECO:0000255" key="1"/>
<evidence type="ECO:0000269" key="2">
    <source>
    </source>
</evidence>
<evidence type="ECO:0000269" key="3">
    <source>
    </source>
</evidence>
<evidence type="ECO:0000303" key="4">
    <source>
    </source>
</evidence>
<evidence type="ECO:0000305" key="5"/>
<evidence type="ECO:0000305" key="6">
    <source>
    </source>
</evidence>
<evidence type="ECO:0000312" key="7">
    <source>
        <dbReference type="EMBL" id="CAB88885.1"/>
    </source>
</evidence>
<evidence type="ECO:0000312" key="8">
    <source>
        <dbReference type="Proteomes" id="UP000001973"/>
    </source>
</evidence>
<feature type="chain" id="PRO_0000461869" description="Cardiolipin synthase (CMP-forming)">
    <location>
        <begin position="1"/>
        <end position="215"/>
    </location>
</feature>
<feature type="transmembrane region" description="Helical" evidence="1">
    <location>
        <begin position="29"/>
        <end position="49"/>
    </location>
</feature>
<feature type="transmembrane region" description="Helical" evidence="1">
    <location>
        <begin position="60"/>
        <end position="80"/>
    </location>
</feature>
<feature type="transmembrane region" description="Helical" evidence="1">
    <location>
        <begin position="117"/>
        <end position="137"/>
    </location>
</feature>
<feature type="transmembrane region" description="Helical" evidence="1">
    <location>
        <begin position="158"/>
        <end position="178"/>
    </location>
</feature>
<feature type="transmembrane region" description="Helical" evidence="1">
    <location>
        <begin position="179"/>
        <end position="199"/>
    </location>
</feature>